<name>HIS8_YERPY</name>
<sequence>MSQSNNVTDLARANIRALTPYMSARRLGGNGDVWLNANEYPLGTEYQLTTQTFNRYPECQPKHVIERYAAYAGLPPEQVLVSRGADEGIELLIRAFCEPGQDAILFCPPTYGMYAVSAETFGVERRTVPAQADWQLDLPAIANNLEQVKVIYVCSPNNPTGNLINPADLQAVLALAQGRAIVAIDEAYIEFCPQASVSNWLKDYPNLVILRTLSKAFALAGLRCGFTLANSDIIQLLLKVIAPYPLSTPVADIAAQALSPKGIEQMRQRVSEVRANRAWLQSALQDCACVEQVFTSESNYLLVRFTASSSVFKVLWDQGIILRDQNKQPGLANCLRITIGTRQECERVIAALAPLAGIDNSNNIDNQSKTHSQTSSIRKGTI</sequence>
<gene>
    <name evidence="1" type="primary">hisC</name>
    <name type="ordered locus">YPK_2527</name>
</gene>
<protein>
    <recommendedName>
        <fullName evidence="1">Histidinol-phosphate aminotransferase</fullName>
        <ecNumber evidence="1">2.6.1.9</ecNumber>
    </recommendedName>
    <alternativeName>
        <fullName evidence="1">Imidazole acetol-phosphate transaminase</fullName>
    </alternativeName>
</protein>
<feature type="chain" id="PRO_1000135437" description="Histidinol-phosphate aminotransferase">
    <location>
        <begin position="1"/>
        <end position="382"/>
    </location>
</feature>
<feature type="region of interest" description="Disordered" evidence="2">
    <location>
        <begin position="363"/>
        <end position="382"/>
    </location>
</feature>
<feature type="modified residue" description="N6-(pyridoxal phosphate)lysine" evidence="1">
    <location>
        <position position="215"/>
    </location>
</feature>
<organism>
    <name type="scientific">Yersinia pseudotuberculosis serotype O:3 (strain YPIII)</name>
    <dbReference type="NCBI Taxonomy" id="502800"/>
    <lineage>
        <taxon>Bacteria</taxon>
        <taxon>Pseudomonadati</taxon>
        <taxon>Pseudomonadota</taxon>
        <taxon>Gammaproteobacteria</taxon>
        <taxon>Enterobacterales</taxon>
        <taxon>Yersiniaceae</taxon>
        <taxon>Yersinia</taxon>
    </lineage>
</organism>
<evidence type="ECO:0000255" key="1">
    <source>
        <dbReference type="HAMAP-Rule" id="MF_01023"/>
    </source>
</evidence>
<evidence type="ECO:0000256" key="2">
    <source>
        <dbReference type="SAM" id="MobiDB-lite"/>
    </source>
</evidence>
<proteinExistence type="inferred from homology"/>
<dbReference type="EC" id="2.6.1.9" evidence="1"/>
<dbReference type="EMBL" id="CP000950">
    <property type="protein sequence ID" value="ACA68804.1"/>
    <property type="molecule type" value="Genomic_DNA"/>
</dbReference>
<dbReference type="RefSeq" id="WP_012304245.1">
    <property type="nucleotide sequence ID" value="NZ_CP009792.1"/>
</dbReference>
<dbReference type="SMR" id="B1JPW1"/>
<dbReference type="KEGG" id="ypy:YPK_2527"/>
<dbReference type="PATRIC" id="fig|502800.11.peg.3224"/>
<dbReference type="UniPathway" id="UPA00031">
    <property type="reaction ID" value="UER00012"/>
</dbReference>
<dbReference type="GO" id="GO:0004400">
    <property type="term" value="F:histidinol-phosphate transaminase activity"/>
    <property type="evidence" value="ECO:0007669"/>
    <property type="project" value="UniProtKB-UniRule"/>
</dbReference>
<dbReference type="GO" id="GO:0030170">
    <property type="term" value="F:pyridoxal phosphate binding"/>
    <property type="evidence" value="ECO:0007669"/>
    <property type="project" value="InterPro"/>
</dbReference>
<dbReference type="GO" id="GO:0000105">
    <property type="term" value="P:L-histidine biosynthetic process"/>
    <property type="evidence" value="ECO:0007669"/>
    <property type="project" value="UniProtKB-UniRule"/>
</dbReference>
<dbReference type="CDD" id="cd00609">
    <property type="entry name" value="AAT_like"/>
    <property type="match status" value="1"/>
</dbReference>
<dbReference type="Gene3D" id="3.90.1150.10">
    <property type="entry name" value="Aspartate Aminotransferase, domain 1"/>
    <property type="match status" value="1"/>
</dbReference>
<dbReference type="Gene3D" id="3.40.640.10">
    <property type="entry name" value="Type I PLP-dependent aspartate aminotransferase-like (Major domain)"/>
    <property type="match status" value="1"/>
</dbReference>
<dbReference type="HAMAP" id="MF_01023">
    <property type="entry name" value="HisC_aminotrans_2"/>
    <property type="match status" value="1"/>
</dbReference>
<dbReference type="InterPro" id="IPR001917">
    <property type="entry name" value="Aminotrans_II_pyridoxalP_BS"/>
</dbReference>
<dbReference type="InterPro" id="IPR004839">
    <property type="entry name" value="Aminotransferase_I/II_large"/>
</dbReference>
<dbReference type="InterPro" id="IPR005861">
    <property type="entry name" value="HisP_aminotrans"/>
</dbReference>
<dbReference type="InterPro" id="IPR015424">
    <property type="entry name" value="PyrdxlP-dep_Trfase"/>
</dbReference>
<dbReference type="InterPro" id="IPR015421">
    <property type="entry name" value="PyrdxlP-dep_Trfase_major"/>
</dbReference>
<dbReference type="InterPro" id="IPR015422">
    <property type="entry name" value="PyrdxlP-dep_Trfase_small"/>
</dbReference>
<dbReference type="NCBIfam" id="TIGR01141">
    <property type="entry name" value="hisC"/>
    <property type="match status" value="1"/>
</dbReference>
<dbReference type="PANTHER" id="PTHR42885:SF2">
    <property type="entry name" value="HISTIDINOL-PHOSPHATE AMINOTRANSFERASE"/>
    <property type="match status" value="1"/>
</dbReference>
<dbReference type="PANTHER" id="PTHR42885">
    <property type="entry name" value="HISTIDINOL-PHOSPHATE AMINOTRANSFERASE-RELATED"/>
    <property type="match status" value="1"/>
</dbReference>
<dbReference type="Pfam" id="PF00155">
    <property type="entry name" value="Aminotran_1_2"/>
    <property type="match status" value="1"/>
</dbReference>
<dbReference type="SUPFAM" id="SSF53383">
    <property type="entry name" value="PLP-dependent transferases"/>
    <property type="match status" value="1"/>
</dbReference>
<dbReference type="PROSITE" id="PS00599">
    <property type="entry name" value="AA_TRANSFER_CLASS_2"/>
    <property type="match status" value="1"/>
</dbReference>
<comment type="catalytic activity">
    <reaction evidence="1">
        <text>L-histidinol phosphate + 2-oxoglutarate = 3-(imidazol-4-yl)-2-oxopropyl phosphate + L-glutamate</text>
        <dbReference type="Rhea" id="RHEA:23744"/>
        <dbReference type="ChEBI" id="CHEBI:16810"/>
        <dbReference type="ChEBI" id="CHEBI:29985"/>
        <dbReference type="ChEBI" id="CHEBI:57766"/>
        <dbReference type="ChEBI" id="CHEBI:57980"/>
        <dbReference type="EC" id="2.6.1.9"/>
    </reaction>
</comment>
<comment type="cofactor">
    <cofactor evidence="1">
        <name>pyridoxal 5'-phosphate</name>
        <dbReference type="ChEBI" id="CHEBI:597326"/>
    </cofactor>
</comment>
<comment type="pathway">
    <text evidence="1">Amino-acid biosynthesis; L-histidine biosynthesis; L-histidine from 5-phospho-alpha-D-ribose 1-diphosphate: step 7/9.</text>
</comment>
<comment type="subunit">
    <text evidence="1">Homodimer.</text>
</comment>
<comment type="similarity">
    <text evidence="1">Belongs to the class-II pyridoxal-phosphate-dependent aminotransferase family. Histidinol-phosphate aminotransferase subfamily.</text>
</comment>
<accession>B1JPW1</accession>
<reference key="1">
    <citation type="submission" date="2008-02" db="EMBL/GenBank/DDBJ databases">
        <title>Complete sequence of Yersinia pseudotuberculosis YPIII.</title>
        <authorList>
            <consortium name="US DOE Joint Genome Institute"/>
            <person name="Copeland A."/>
            <person name="Lucas S."/>
            <person name="Lapidus A."/>
            <person name="Glavina del Rio T."/>
            <person name="Dalin E."/>
            <person name="Tice H."/>
            <person name="Bruce D."/>
            <person name="Goodwin L."/>
            <person name="Pitluck S."/>
            <person name="Munk A.C."/>
            <person name="Brettin T."/>
            <person name="Detter J.C."/>
            <person name="Han C."/>
            <person name="Tapia R."/>
            <person name="Schmutz J."/>
            <person name="Larimer F."/>
            <person name="Land M."/>
            <person name="Hauser L."/>
            <person name="Challacombe J.F."/>
            <person name="Green L."/>
            <person name="Lindler L.E."/>
            <person name="Nikolich M.P."/>
            <person name="Richardson P."/>
        </authorList>
    </citation>
    <scope>NUCLEOTIDE SEQUENCE [LARGE SCALE GENOMIC DNA]</scope>
    <source>
        <strain>YPIII</strain>
    </source>
</reference>
<keyword id="KW-0028">Amino-acid biosynthesis</keyword>
<keyword id="KW-0032">Aminotransferase</keyword>
<keyword id="KW-0368">Histidine biosynthesis</keyword>
<keyword id="KW-0663">Pyridoxal phosphate</keyword>
<keyword id="KW-0808">Transferase</keyword>